<evidence type="ECO:0000255" key="1">
    <source>
        <dbReference type="HAMAP-Rule" id="MF_01241"/>
    </source>
</evidence>
<organism>
    <name type="scientific">Glaesserella parasuis serovar 5 (strain SH0165)</name>
    <name type="common">Haemophilus parasuis</name>
    <dbReference type="NCBI Taxonomy" id="557723"/>
    <lineage>
        <taxon>Bacteria</taxon>
        <taxon>Pseudomonadati</taxon>
        <taxon>Pseudomonadota</taxon>
        <taxon>Gammaproteobacteria</taxon>
        <taxon>Pasteurellales</taxon>
        <taxon>Pasteurellaceae</taxon>
        <taxon>Glaesserella</taxon>
    </lineage>
</organism>
<sequence>MRLVPLDCAEQVSRWAARYIVDKINAFQPTAEKPFVLGLPTGGTPLQTYKELIKLYQAGEVSFKHVVTFNMDEYVGLPPEHKESYHYFMFHNFFNHIDIPVENVNILNGMAEDVDAECERYEAKIRSYGKIHLFMGGVGVDGHIAFNEPASSLSSRTRIKTLTEDTLIANSRFFDNDVNKVPKFALTVGVGTLMDAEEVLILVTGYNKALALQACVEGAVNHLWTISALQLHRRAVVVCDEPATQELKVKTVKYFKQLEQNIAR</sequence>
<protein>
    <recommendedName>
        <fullName evidence="1">Glucosamine-6-phosphate deaminase</fullName>
        <ecNumber evidence="1">3.5.99.6</ecNumber>
    </recommendedName>
    <alternativeName>
        <fullName evidence="1">GlcN6P deaminase</fullName>
        <shortName evidence="1">GNPDA</shortName>
    </alternativeName>
    <alternativeName>
        <fullName evidence="1">Glucosamine-6-phosphate isomerase</fullName>
    </alternativeName>
</protein>
<comment type="function">
    <text evidence="1">Catalyzes the reversible isomerization-deamination of glucosamine 6-phosphate (GlcN6P) to form fructose 6-phosphate (Fru6P) and ammonium ion.</text>
</comment>
<comment type="catalytic activity">
    <reaction evidence="1">
        <text>alpha-D-glucosamine 6-phosphate + H2O = beta-D-fructose 6-phosphate + NH4(+)</text>
        <dbReference type="Rhea" id="RHEA:12172"/>
        <dbReference type="ChEBI" id="CHEBI:15377"/>
        <dbReference type="ChEBI" id="CHEBI:28938"/>
        <dbReference type="ChEBI" id="CHEBI:57634"/>
        <dbReference type="ChEBI" id="CHEBI:75989"/>
        <dbReference type="EC" id="3.5.99.6"/>
    </reaction>
</comment>
<comment type="activity regulation">
    <text evidence="1">Allosterically activated by N-acetylglucosamine 6-phosphate (GlcNAc6P).</text>
</comment>
<comment type="pathway">
    <text evidence="1">Amino-sugar metabolism; N-acetylneuraminate degradation; D-fructose 6-phosphate from N-acetylneuraminate: step 5/5.</text>
</comment>
<comment type="subunit">
    <text evidence="1">Homohexamer.</text>
</comment>
<comment type="similarity">
    <text evidence="1">Belongs to the glucosamine/galactosamine-6-phosphate isomerase family. NagB subfamily.</text>
</comment>
<name>NAGB_GLAP5</name>
<keyword id="KW-0021">Allosteric enzyme</keyword>
<keyword id="KW-0119">Carbohydrate metabolism</keyword>
<keyword id="KW-0378">Hydrolase</keyword>
<keyword id="KW-1185">Reference proteome</keyword>
<dbReference type="EC" id="3.5.99.6" evidence="1"/>
<dbReference type="EMBL" id="CP001321">
    <property type="protein sequence ID" value="ACL33529.1"/>
    <property type="molecule type" value="Genomic_DNA"/>
</dbReference>
<dbReference type="RefSeq" id="WP_010787210.1">
    <property type="nucleotide sequence ID" value="NC_011852.1"/>
</dbReference>
<dbReference type="SMR" id="B8F877"/>
<dbReference type="STRING" id="557723.HAPS_2072"/>
<dbReference type="GeneID" id="66619517"/>
<dbReference type="KEGG" id="hap:HAPS_2072"/>
<dbReference type="PATRIC" id="fig|557723.8.peg.2057"/>
<dbReference type="HOGENOM" id="CLU_049611_0_1_6"/>
<dbReference type="UniPathway" id="UPA00629">
    <property type="reaction ID" value="UER00684"/>
</dbReference>
<dbReference type="Proteomes" id="UP000006743">
    <property type="component" value="Chromosome"/>
</dbReference>
<dbReference type="GO" id="GO:0005737">
    <property type="term" value="C:cytoplasm"/>
    <property type="evidence" value="ECO:0007669"/>
    <property type="project" value="TreeGrafter"/>
</dbReference>
<dbReference type="GO" id="GO:0004342">
    <property type="term" value="F:glucosamine-6-phosphate deaminase activity"/>
    <property type="evidence" value="ECO:0007669"/>
    <property type="project" value="UniProtKB-UniRule"/>
</dbReference>
<dbReference type="GO" id="GO:0042802">
    <property type="term" value="F:identical protein binding"/>
    <property type="evidence" value="ECO:0007669"/>
    <property type="project" value="TreeGrafter"/>
</dbReference>
<dbReference type="GO" id="GO:0005975">
    <property type="term" value="P:carbohydrate metabolic process"/>
    <property type="evidence" value="ECO:0007669"/>
    <property type="project" value="InterPro"/>
</dbReference>
<dbReference type="GO" id="GO:0006043">
    <property type="term" value="P:glucosamine catabolic process"/>
    <property type="evidence" value="ECO:0007669"/>
    <property type="project" value="TreeGrafter"/>
</dbReference>
<dbReference type="GO" id="GO:0006046">
    <property type="term" value="P:N-acetylglucosamine catabolic process"/>
    <property type="evidence" value="ECO:0007669"/>
    <property type="project" value="TreeGrafter"/>
</dbReference>
<dbReference type="GO" id="GO:0019262">
    <property type="term" value="P:N-acetylneuraminate catabolic process"/>
    <property type="evidence" value="ECO:0007669"/>
    <property type="project" value="UniProtKB-UniRule"/>
</dbReference>
<dbReference type="CDD" id="cd01399">
    <property type="entry name" value="GlcN6P_deaminase"/>
    <property type="match status" value="1"/>
</dbReference>
<dbReference type="FunFam" id="3.40.50.1360:FF:000002">
    <property type="entry name" value="Glucosamine-6-phosphate deaminase"/>
    <property type="match status" value="1"/>
</dbReference>
<dbReference type="Gene3D" id="3.40.50.1360">
    <property type="match status" value="1"/>
</dbReference>
<dbReference type="HAMAP" id="MF_01241">
    <property type="entry name" value="GlcN6P_deamin"/>
    <property type="match status" value="1"/>
</dbReference>
<dbReference type="InterPro" id="IPR006148">
    <property type="entry name" value="Glc/Gal-6P_isomerase"/>
</dbReference>
<dbReference type="InterPro" id="IPR004547">
    <property type="entry name" value="Glucosamine6P_isomerase"/>
</dbReference>
<dbReference type="InterPro" id="IPR018321">
    <property type="entry name" value="Glucosamine6P_isomerase_CS"/>
</dbReference>
<dbReference type="InterPro" id="IPR037171">
    <property type="entry name" value="NagB/RpiA_transferase-like"/>
</dbReference>
<dbReference type="NCBIfam" id="TIGR00502">
    <property type="entry name" value="nagB"/>
    <property type="match status" value="1"/>
</dbReference>
<dbReference type="PANTHER" id="PTHR11280">
    <property type="entry name" value="GLUCOSAMINE-6-PHOSPHATE ISOMERASE"/>
    <property type="match status" value="1"/>
</dbReference>
<dbReference type="PANTHER" id="PTHR11280:SF5">
    <property type="entry name" value="GLUCOSAMINE-6-PHOSPHATE ISOMERASE"/>
    <property type="match status" value="1"/>
</dbReference>
<dbReference type="Pfam" id="PF01182">
    <property type="entry name" value="Glucosamine_iso"/>
    <property type="match status" value="1"/>
</dbReference>
<dbReference type="SUPFAM" id="SSF100950">
    <property type="entry name" value="NagB/RpiA/CoA transferase-like"/>
    <property type="match status" value="1"/>
</dbReference>
<dbReference type="PROSITE" id="PS01161">
    <property type="entry name" value="GLC_GALNAC_ISOMERASE"/>
    <property type="match status" value="1"/>
</dbReference>
<gene>
    <name evidence="1" type="primary">nagB</name>
    <name type="ordered locus">HAPS_2072</name>
</gene>
<proteinExistence type="inferred from homology"/>
<accession>B8F877</accession>
<feature type="chain" id="PRO_1000165020" description="Glucosamine-6-phosphate deaminase">
    <location>
        <begin position="1"/>
        <end position="264"/>
    </location>
</feature>
<feature type="active site" description="Proton acceptor; for enolization step" evidence="1">
    <location>
        <position position="72"/>
    </location>
</feature>
<feature type="active site" description="For ring-opening step" evidence="1">
    <location>
        <position position="141"/>
    </location>
</feature>
<feature type="active site" description="Proton acceptor; for ring-opening step" evidence="1">
    <location>
        <position position="143"/>
    </location>
</feature>
<feature type="active site" description="For ring-opening step" evidence="1">
    <location>
        <position position="148"/>
    </location>
</feature>
<feature type="site" description="Part of the allosteric site" evidence="1">
    <location>
        <position position="151"/>
    </location>
</feature>
<feature type="site" description="Part of the allosteric site" evidence="1">
    <location>
        <position position="158"/>
    </location>
</feature>
<feature type="site" description="Part of the allosteric site" evidence="1">
    <location>
        <position position="160"/>
    </location>
</feature>
<feature type="site" description="Part of the allosteric site" evidence="1">
    <location>
        <position position="161"/>
    </location>
</feature>
<feature type="site" description="Part of the allosteric site" evidence="1">
    <location>
        <position position="254"/>
    </location>
</feature>
<reference key="1">
    <citation type="journal article" date="2009" name="J. Bacteriol.">
        <title>Complete genome sequence of Haemophilus parasuis SH0165.</title>
        <authorList>
            <person name="Yue M."/>
            <person name="Yang F."/>
            <person name="Yang J."/>
            <person name="Bei W."/>
            <person name="Cai X."/>
            <person name="Chen L."/>
            <person name="Dong J."/>
            <person name="Zhou R."/>
            <person name="Jin M."/>
            <person name="Jin Q."/>
            <person name="Chen H."/>
        </authorList>
    </citation>
    <scope>NUCLEOTIDE SEQUENCE [LARGE SCALE GENOMIC DNA]</scope>
    <source>
        <strain>SH0165</strain>
    </source>
</reference>